<sequence length="251" mass="26416">MTTIGTRKRVAVVTGASSGIGEATARTLAAQGFHVVAVARRADRITALANQIGGTAIVADVTDDAAVEALARALSRVDVLVNNAGGAKGLQFVADADLEHWRWMWDTNVLGTLRVTRALLPKLIDSGDGLIVTVTSIAAIEVYDGGAGYTAAKHAQGALHRTLRGELLGKPVRLTEIAPGAVETEFSLVRFDGDQQRADAVYAGMTPLVAADVAEVIGFVATRPSHVNLDQIVIRPRDQASASRRATHPVR</sequence>
<comment type="similarity">
    <text evidence="2">Belongs to the short-chain dehydrogenases/reductases (SDR) family.</text>
</comment>
<organism>
    <name type="scientific">Mycobacterium tuberculosis (strain ATCC 25618 / H37Rv)</name>
    <dbReference type="NCBI Taxonomy" id="83332"/>
    <lineage>
        <taxon>Bacteria</taxon>
        <taxon>Bacillati</taxon>
        <taxon>Actinomycetota</taxon>
        <taxon>Actinomycetes</taxon>
        <taxon>Mycobacteriales</taxon>
        <taxon>Mycobacteriaceae</taxon>
        <taxon>Mycobacterium</taxon>
        <taxon>Mycobacterium tuberculosis complex</taxon>
    </lineage>
</organism>
<gene>
    <name type="ordered locus">Rv0484c</name>
    <name type="ORF">MTCY20G9.10c</name>
</gene>
<reference key="1">
    <citation type="journal article" date="1998" name="Nature">
        <title>Deciphering the biology of Mycobacterium tuberculosis from the complete genome sequence.</title>
        <authorList>
            <person name="Cole S.T."/>
            <person name="Brosch R."/>
            <person name="Parkhill J."/>
            <person name="Garnier T."/>
            <person name="Churcher C.M."/>
            <person name="Harris D.E."/>
            <person name="Gordon S.V."/>
            <person name="Eiglmeier K."/>
            <person name="Gas S."/>
            <person name="Barry C.E. III"/>
            <person name="Tekaia F."/>
            <person name="Badcock K."/>
            <person name="Basham D."/>
            <person name="Brown D."/>
            <person name="Chillingworth T."/>
            <person name="Connor R."/>
            <person name="Davies R.M."/>
            <person name="Devlin K."/>
            <person name="Feltwell T."/>
            <person name="Gentles S."/>
            <person name="Hamlin N."/>
            <person name="Holroyd S."/>
            <person name="Hornsby T."/>
            <person name="Jagels K."/>
            <person name="Krogh A."/>
            <person name="McLean J."/>
            <person name="Moule S."/>
            <person name="Murphy L.D."/>
            <person name="Oliver S."/>
            <person name="Osborne J."/>
            <person name="Quail M.A."/>
            <person name="Rajandream M.A."/>
            <person name="Rogers J."/>
            <person name="Rutter S."/>
            <person name="Seeger K."/>
            <person name="Skelton S."/>
            <person name="Squares S."/>
            <person name="Squares R."/>
            <person name="Sulston J.E."/>
            <person name="Taylor K."/>
            <person name="Whitehead S."/>
            <person name="Barrell B.G."/>
        </authorList>
    </citation>
    <scope>NUCLEOTIDE SEQUENCE [LARGE SCALE GENOMIC DNA]</scope>
    <source>
        <strain>ATCC 25618 / H37Rv</strain>
    </source>
</reference>
<reference key="2">
    <citation type="journal article" date="2011" name="Mol. Cell. Proteomics">
        <title>Proteogenomic analysis of Mycobacterium tuberculosis by high resolution mass spectrometry.</title>
        <authorList>
            <person name="Kelkar D.S."/>
            <person name="Kumar D."/>
            <person name="Kumar P."/>
            <person name="Balakrishnan L."/>
            <person name="Muthusamy B."/>
            <person name="Yadav A.K."/>
            <person name="Shrivastava P."/>
            <person name="Marimuthu A."/>
            <person name="Anand S."/>
            <person name="Sundaram H."/>
            <person name="Kingsbury R."/>
            <person name="Harsha H.C."/>
            <person name="Nair B."/>
            <person name="Prasad T.S."/>
            <person name="Chauhan D.S."/>
            <person name="Katoch K."/>
            <person name="Katoch V.M."/>
            <person name="Kumar P."/>
            <person name="Chaerkady R."/>
            <person name="Ramachandran S."/>
            <person name="Dash D."/>
            <person name="Pandey A."/>
        </authorList>
    </citation>
    <scope>IDENTIFICATION BY MASS SPECTROMETRY [LARGE SCALE ANALYSIS]</scope>
    <source>
        <strain>ATCC 25618 / H37Rv</strain>
    </source>
</reference>
<feature type="chain" id="PRO_0000054863" description="Uncharacterized oxidoreductase Rv0484c">
    <location>
        <begin position="1"/>
        <end position="251"/>
    </location>
</feature>
<feature type="active site" description="Proton acceptor" evidence="1">
    <location>
        <position position="149"/>
    </location>
</feature>
<feature type="binding site" evidence="1">
    <location>
        <begin position="12"/>
        <end position="36"/>
    </location>
    <ligand>
        <name>NADP(+)</name>
        <dbReference type="ChEBI" id="CHEBI:58349"/>
    </ligand>
</feature>
<feature type="binding site" evidence="1">
    <location>
        <position position="136"/>
    </location>
    <ligand>
        <name>substrate</name>
    </ligand>
</feature>
<dbReference type="EC" id="1.-.-.-"/>
<dbReference type="EMBL" id="AL123456">
    <property type="protein sequence ID" value="CCP43218.1"/>
    <property type="molecule type" value="Genomic_DNA"/>
</dbReference>
<dbReference type="PIR" id="G70743">
    <property type="entry name" value="G70743"/>
</dbReference>
<dbReference type="RefSeq" id="NP_214998.1">
    <property type="nucleotide sequence ID" value="NC_000962.3"/>
</dbReference>
<dbReference type="RefSeq" id="WP_003900154.1">
    <property type="nucleotide sequence ID" value="NZ_NVQJ01000002.1"/>
</dbReference>
<dbReference type="SMR" id="P9WGR5"/>
<dbReference type="FunCoup" id="P9WGR5">
    <property type="interactions" value="37"/>
</dbReference>
<dbReference type="STRING" id="83332.Rv0484c"/>
<dbReference type="PaxDb" id="83332-Rv0484c"/>
<dbReference type="DNASU" id="887158"/>
<dbReference type="GeneID" id="887158"/>
<dbReference type="KEGG" id="mtu:Rv0484c"/>
<dbReference type="KEGG" id="mtv:RVBD_0484c"/>
<dbReference type="TubercuList" id="Rv0484c"/>
<dbReference type="eggNOG" id="COG4221">
    <property type="taxonomic scope" value="Bacteria"/>
</dbReference>
<dbReference type="InParanoid" id="P9WGR5"/>
<dbReference type="OrthoDB" id="9775296at2"/>
<dbReference type="PhylomeDB" id="P9WGR5"/>
<dbReference type="Proteomes" id="UP000001584">
    <property type="component" value="Chromosome"/>
</dbReference>
<dbReference type="GO" id="GO:0005886">
    <property type="term" value="C:plasma membrane"/>
    <property type="evidence" value="ECO:0007005"/>
    <property type="project" value="MTBBASE"/>
</dbReference>
<dbReference type="GO" id="GO:0016616">
    <property type="term" value="F:oxidoreductase activity, acting on the CH-OH group of donors, NAD or NADP as acceptor"/>
    <property type="evidence" value="ECO:0000318"/>
    <property type="project" value="GO_Central"/>
</dbReference>
<dbReference type="FunFam" id="3.40.50.720:FF:000047">
    <property type="entry name" value="NADP-dependent L-serine/L-allo-threonine dehydrogenase"/>
    <property type="match status" value="1"/>
</dbReference>
<dbReference type="Gene3D" id="3.40.50.720">
    <property type="entry name" value="NAD(P)-binding Rossmann-like Domain"/>
    <property type="match status" value="1"/>
</dbReference>
<dbReference type="InterPro" id="IPR036291">
    <property type="entry name" value="NAD(P)-bd_dom_sf"/>
</dbReference>
<dbReference type="InterPro" id="IPR002347">
    <property type="entry name" value="SDR_fam"/>
</dbReference>
<dbReference type="PANTHER" id="PTHR42901">
    <property type="entry name" value="ALCOHOL DEHYDROGENASE"/>
    <property type="match status" value="1"/>
</dbReference>
<dbReference type="PANTHER" id="PTHR42901:SF1">
    <property type="entry name" value="ALCOHOL DEHYDROGENASE"/>
    <property type="match status" value="1"/>
</dbReference>
<dbReference type="Pfam" id="PF00106">
    <property type="entry name" value="adh_short"/>
    <property type="match status" value="1"/>
</dbReference>
<dbReference type="PRINTS" id="PR00081">
    <property type="entry name" value="GDHRDH"/>
</dbReference>
<dbReference type="PRINTS" id="PR00080">
    <property type="entry name" value="SDRFAMILY"/>
</dbReference>
<dbReference type="SUPFAM" id="SSF51735">
    <property type="entry name" value="NAD(P)-binding Rossmann-fold domains"/>
    <property type="match status" value="1"/>
</dbReference>
<evidence type="ECO:0000250" key="1"/>
<evidence type="ECO:0000305" key="2"/>
<protein>
    <recommendedName>
        <fullName>Uncharacterized oxidoreductase Rv0484c</fullName>
        <ecNumber>1.-.-.-</ecNumber>
    </recommendedName>
</protein>
<name>Y484_MYCTU</name>
<keyword id="KW-0560">Oxidoreductase</keyword>
<keyword id="KW-1185">Reference proteome</keyword>
<accession>P9WGR5</accession>
<accession>L0T6M0</accession>
<accession>Q11150</accession>
<proteinExistence type="evidence at protein level"/>